<proteinExistence type="inferred from homology"/>
<organism>
    <name type="scientific">Pseudomonas paraeruginosa (strain DSM 24068 / PA7)</name>
    <name type="common">Pseudomonas aeruginosa (strain PA7)</name>
    <dbReference type="NCBI Taxonomy" id="381754"/>
    <lineage>
        <taxon>Bacteria</taxon>
        <taxon>Pseudomonadati</taxon>
        <taxon>Pseudomonadota</taxon>
        <taxon>Gammaproteobacteria</taxon>
        <taxon>Pseudomonadales</taxon>
        <taxon>Pseudomonadaceae</taxon>
        <taxon>Pseudomonas</taxon>
        <taxon>Pseudomonas paraeruginosa</taxon>
    </lineage>
</organism>
<gene>
    <name evidence="1" type="primary">secA</name>
    <name type="ordered locus">PSPA7_4974</name>
</gene>
<comment type="function">
    <text evidence="1">Part of the Sec protein translocase complex. Interacts with the SecYEG preprotein conducting channel. Has a central role in coupling the hydrolysis of ATP to the transfer of proteins into and across the cell membrane, serving both as a receptor for the preprotein-SecB complex and as an ATP-driven molecular motor driving the stepwise translocation of polypeptide chains across the membrane.</text>
</comment>
<comment type="catalytic activity">
    <reaction evidence="1">
        <text>ATP + H2O + cellular proteinSide 1 = ADP + phosphate + cellular proteinSide 2.</text>
        <dbReference type="EC" id="7.4.2.8"/>
    </reaction>
</comment>
<comment type="cofactor">
    <cofactor evidence="1">
        <name>Zn(2+)</name>
        <dbReference type="ChEBI" id="CHEBI:29105"/>
    </cofactor>
    <text evidence="1">May bind 1 zinc ion per subunit.</text>
</comment>
<comment type="subunit">
    <text evidence="1">Monomer and homodimer. Part of the essential Sec protein translocation apparatus which comprises SecA, SecYEG and auxiliary proteins SecDF-YajC and YidC.</text>
</comment>
<comment type="subcellular location">
    <subcellularLocation>
        <location evidence="1">Cell inner membrane</location>
        <topology evidence="1">Peripheral membrane protein</topology>
        <orientation evidence="1">Cytoplasmic side</orientation>
    </subcellularLocation>
    <subcellularLocation>
        <location evidence="1">Cytoplasm</location>
    </subcellularLocation>
    <text evidence="1">Distribution is 50-50.</text>
</comment>
<comment type="similarity">
    <text evidence="1">Belongs to the SecA family.</text>
</comment>
<evidence type="ECO:0000255" key="1">
    <source>
        <dbReference type="HAMAP-Rule" id="MF_01382"/>
    </source>
</evidence>
<evidence type="ECO:0000256" key="2">
    <source>
        <dbReference type="SAM" id="MobiDB-lite"/>
    </source>
</evidence>
<protein>
    <recommendedName>
        <fullName evidence="1">Protein translocase subunit SecA</fullName>
        <ecNumber evidence="1">7.4.2.8</ecNumber>
    </recommendedName>
</protein>
<accession>A6VB75</accession>
<sequence>MFAPLLKKLFGSKNERDVKRMAKAVQAINALEPQMVALSDEQLKAKTAEFQQRYAKGETLDQLLPEAFAVVREAGKRVMGMRHFDVQLIGGMTLHDGKIAEMRTGEGKTLVGTLPVYLNALSGKGVHVVTVNDYLARRDANWMRPLYEFLGLSVGVVTPFQPPEDKRAAYAADITYGTNNEFGFDYLRDNMAFSLDDKFQRELNFAVVDEVDSILIDEARTPLIISGQAEDSSELYIKINKLIPRLKRQVEEVEGKPSEEGHYSIDEKTRQVELNEQGHQFIEDLLSQNGLLGEGESLYSAHNLSLLTHVYAALRAHTLFHRNVEYIVQGDQILLIDEHTGRTMPGRRLSEGLHQAIEAKEGLPIQAESQTLASTTFQNYFRLYNKLAGMTGTADTEAFEFRQIYGLDVVVIPTHRPIARKDFNDLVYLTQEEKYAAIITDIKQCQALGRPILVGTASIESSEYVSKLLQQAGIEHKVLNAKYHEKEAEIIAQAGAPGSVTIATNMAGRGTDILLGGNWEVEVAALENPTEEQIAQIKAEWQKRHQQVIEAGGLHVIASERHESRRIDNQLRGRAGRQGDPGSSRFYLSLEDNLMRIFASDRVKNFMKALGMQSGEAIEHRMVTNAIEKAQRKVEGRNFDIRKQLLEFDDVANEQRKVIYHMRNTLLSAEDVGETIKEFREETLNATINQHIPPQSLPEQWDVEGLEAALYSDFAVRLPIQQWLDEDDKLYEETLRSKILEQIVAAYYEKEELAGAEALRAFEKQMLLRVLDDLWKDHLSTMDHLRHGIHLRGYAQKNPKQEYKRESFTLFQELLDSIKRDTIRVLSHVQVRREDPAEEEARLRREAEELAKRMQFQHAEAPSMEQAVAGEDEELPEGPAPVVPLEPVRNEQKIGRNEPCPCGSGKKYKHCHGQLD</sequence>
<feature type="chain" id="PRO_0000320894" description="Protein translocase subunit SecA">
    <location>
        <begin position="1"/>
        <end position="916"/>
    </location>
</feature>
<feature type="region of interest" description="Disordered" evidence="2">
    <location>
        <begin position="857"/>
        <end position="916"/>
    </location>
</feature>
<feature type="compositionally biased region" description="Basic residues" evidence="2">
    <location>
        <begin position="906"/>
        <end position="916"/>
    </location>
</feature>
<feature type="binding site" evidence="1">
    <location>
        <position position="87"/>
    </location>
    <ligand>
        <name>ATP</name>
        <dbReference type="ChEBI" id="CHEBI:30616"/>
    </ligand>
</feature>
<feature type="binding site" evidence="1">
    <location>
        <begin position="105"/>
        <end position="109"/>
    </location>
    <ligand>
        <name>ATP</name>
        <dbReference type="ChEBI" id="CHEBI:30616"/>
    </ligand>
</feature>
<feature type="binding site" evidence="1">
    <location>
        <position position="512"/>
    </location>
    <ligand>
        <name>ATP</name>
        <dbReference type="ChEBI" id="CHEBI:30616"/>
    </ligand>
</feature>
<feature type="binding site" evidence="1">
    <location>
        <position position="900"/>
    </location>
    <ligand>
        <name>Zn(2+)</name>
        <dbReference type="ChEBI" id="CHEBI:29105"/>
    </ligand>
</feature>
<feature type="binding site" evidence="1">
    <location>
        <position position="902"/>
    </location>
    <ligand>
        <name>Zn(2+)</name>
        <dbReference type="ChEBI" id="CHEBI:29105"/>
    </ligand>
</feature>
<feature type="binding site" evidence="1">
    <location>
        <position position="911"/>
    </location>
    <ligand>
        <name>Zn(2+)</name>
        <dbReference type="ChEBI" id="CHEBI:29105"/>
    </ligand>
</feature>
<feature type="binding site" evidence="1">
    <location>
        <position position="912"/>
    </location>
    <ligand>
        <name>Zn(2+)</name>
        <dbReference type="ChEBI" id="CHEBI:29105"/>
    </ligand>
</feature>
<name>SECA_PSEP7</name>
<keyword id="KW-0067">ATP-binding</keyword>
<keyword id="KW-0997">Cell inner membrane</keyword>
<keyword id="KW-1003">Cell membrane</keyword>
<keyword id="KW-0963">Cytoplasm</keyword>
<keyword id="KW-0472">Membrane</keyword>
<keyword id="KW-0479">Metal-binding</keyword>
<keyword id="KW-0547">Nucleotide-binding</keyword>
<keyword id="KW-0653">Protein transport</keyword>
<keyword id="KW-1278">Translocase</keyword>
<keyword id="KW-0811">Translocation</keyword>
<keyword id="KW-0813">Transport</keyword>
<keyword id="KW-0862">Zinc</keyword>
<reference key="1">
    <citation type="submission" date="2007-06" db="EMBL/GenBank/DDBJ databases">
        <authorList>
            <person name="Dodson R.J."/>
            <person name="Harkins D."/>
            <person name="Paulsen I.T."/>
        </authorList>
    </citation>
    <scope>NUCLEOTIDE SEQUENCE [LARGE SCALE GENOMIC DNA]</scope>
    <source>
        <strain>DSM 24068 / PA7</strain>
    </source>
</reference>
<dbReference type="EC" id="7.4.2.8" evidence="1"/>
<dbReference type="EMBL" id="CP000744">
    <property type="protein sequence ID" value="ABR81893.1"/>
    <property type="molecule type" value="Genomic_DNA"/>
</dbReference>
<dbReference type="RefSeq" id="WP_012077187.1">
    <property type="nucleotide sequence ID" value="NC_009656.1"/>
</dbReference>
<dbReference type="SMR" id="A6VB75"/>
<dbReference type="GeneID" id="77222903"/>
<dbReference type="KEGG" id="pap:PSPA7_4974"/>
<dbReference type="HOGENOM" id="CLU_005314_3_0_6"/>
<dbReference type="Proteomes" id="UP000001582">
    <property type="component" value="Chromosome"/>
</dbReference>
<dbReference type="GO" id="GO:0031522">
    <property type="term" value="C:cell envelope Sec protein transport complex"/>
    <property type="evidence" value="ECO:0007669"/>
    <property type="project" value="TreeGrafter"/>
</dbReference>
<dbReference type="GO" id="GO:0005829">
    <property type="term" value="C:cytosol"/>
    <property type="evidence" value="ECO:0007669"/>
    <property type="project" value="TreeGrafter"/>
</dbReference>
<dbReference type="GO" id="GO:0005886">
    <property type="term" value="C:plasma membrane"/>
    <property type="evidence" value="ECO:0007669"/>
    <property type="project" value="UniProtKB-SubCell"/>
</dbReference>
<dbReference type="GO" id="GO:0005524">
    <property type="term" value="F:ATP binding"/>
    <property type="evidence" value="ECO:0007669"/>
    <property type="project" value="UniProtKB-UniRule"/>
</dbReference>
<dbReference type="GO" id="GO:0046872">
    <property type="term" value="F:metal ion binding"/>
    <property type="evidence" value="ECO:0007669"/>
    <property type="project" value="UniProtKB-KW"/>
</dbReference>
<dbReference type="GO" id="GO:0008564">
    <property type="term" value="F:protein-exporting ATPase activity"/>
    <property type="evidence" value="ECO:0007669"/>
    <property type="project" value="UniProtKB-EC"/>
</dbReference>
<dbReference type="GO" id="GO:0065002">
    <property type="term" value="P:intracellular protein transmembrane transport"/>
    <property type="evidence" value="ECO:0007669"/>
    <property type="project" value="UniProtKB-UniRule"/>
</dbReference>
<dbReference type="GO" id="GO:0017038">
    <property type="term" value="P:protein import"/>
    <property type="evidence" value="ECO:0007669"/>
    <property type="project" value="InterPro"/>
</dbReference>
<dbReference type="GO" id="GO:0006605">
    <property type="term" value="P:protein targeting"/>
    <property type="evidence" value="ECO:0007669"/>
    <property type="project" value="UniProtKB-UniRule"/>
</dbReference>
<dbReference type="GO" id="GO:0043952">
    <property type="term" value="P:protein transport by the Sec complex"/>
    <property type="evidence" value="ECO:0007669"/>
    <property type="project" value="TreeGrafter"/>
</dbReference>
<dbReference type="CDD" id="cd17928">
    <property type="entry name" value="DEXDc_SecA"/>
    <property type="match status" value="1"/>
</dbReference>
<dbReference type="CDD" id="cd18803">
    <property type="entry name" value="SF2_C_secA"/>
    <property type="match status" value="1"/>
</dbReference>
<dbReference type="FunFam" id="1.10.3060.10:FF:000001">
    <property type="entry name" value="Preprotein translocase subunit SecA"/>
    <property type="match status" value="1"/>
</dbReference>
<dbReference type="FunFam" id="3.40.50.300:FF:000081">
    <property type="entry name" value="Preprotein translocase subunit SecA"/>
    <property type="match status" value="1"/>
</dbReference>
<dbReference type="FunFam" id="3.40.50.300:FF:000113">
    <property type="entry name" value="Preprotein translocase subunit SecA"/>
    <property type="match status" value="1"/>
</dbReference>
<dbReference type="FunFam" id="3.90.1440.10:FF:000001">
    <property type="entry name" value="Preprotein translocase subunit SecA"/>
    <property type="match status" value="1"/>
</dbReference>
<dbReference type="Gene3D" id="1.10.3060.10">
    <property type="entry name" value="Helical scaffold and wing domains of SecA"/>
    <property type="match status" value="1"/>
</dbReference>
<dbReference type="Gene3D" id="3.40.50.300">
    <property type="entry name" value="P-loop containing nucleotide triphosphate hydrolases"/>
    <property type="match status" value="2"/>
</dbReference>
<dbReference type="Gene3D" id="3.90.1440.10">
    <property type="entry name" value="SecA, preprotein cross-linking domain"/>
    <property type="match status" value="1"/>
</dbReference>
<dbReference type="HAMAP" id="MF_01382">
    <property type="entry name" value="SecA"/>
    <property type="match status" value="1"/>
</dbReference>
<dbReference type="InterPro" id="IPR014001">
    <property type="entry name" value="Helicase_ATP-bd"/>
</dbReference>
<dbReference type="InterPro" id="IPR001650">
    <property type="entry name" value="Helicase_C-like"/>
</dbReference>
<dbReference type="InterPro" id="IPR027417">
    <property type="entry name" value="P-loop_NTPase"/>
</dbReference>
<dbReference type="InterPro" id="IPR004027">
    <property type="entry name" value="SEC_C_motif"/>
</dbReference>
<dbReference type="InterPro" id="IPR000185">
    <property type="entry name" value="SecA"/>
</dbReference>
<dbReference type="InterPro" id="IPR020937">
    <property type="entry name" value="SecA_CS"/>
</dbReference>
<dbReference type="InterPro" id="IPR011115">
    <property type="entry name" value="SecA_DEAD"/>
</dbReference>
<dbReference type="InterPro" id="IPR014018">
    <property type="entry name" value="SecA_motor_DEAD"/>
</dbReference>
<dbReference type="InterPro" id="IPR011130">
    <property type="entry name" value="SecA_preprotein_X-link_dom"/>
</dbReference>
<dbReference type="InterPro" id="IPR044722">
    <property type="entry name" value="SecA_SF2_C"/>
</dbReference>
<dbReference type="InterPro" id="IPR011116">
    <property type="entry name" value="SecA_Wing/Scaffold"/>
</dbReference>
<dbReference type="InterPro" id="IPR036266">
    <property type="entry name" value="SecA_Wing/Scaffold_sf"/>
</dbReference>
<dbReference type="InterPro" id="IPR036670">
    <property type="entry name" value="SecA_X-link_sf"/>
</dbReference>
<dbReference type="NCBIfam" id="NF009538">
    <property type="entry name" value="PRK12904.1"/>
    <property type="match status" value="1"/>
</dbReference>
<dbReference type="NCBIfam" id="TIGR00963">
    <property type="entry name" value="secA"/>
    <property type="match status" value="1"/>
</dbReference>
<dbReference type="PANTHER" id="PTHR30612:SF0">
    <property type="entry name" value="CHLOROPLAST PROTEIN-TRANSPORTING ATPASE"/>
    <property type="match status" value="1"/>
</dbReference>
<dbReference type="PANTHER" id="PTHR30612">
    <property type="entry name" value="SECA INNER MEMBRANE COMPONENT OF SEC PROTEIN SECRETION SYSTEM"/>
    <property type="match status" value="1"/>
</dbReference>
<dbReference type="Pfam" id="PF21090">
    <property type="entry name" value="P-loop_SecA"/>
    <property type="match status" value="1"/>
</dbReference>
<dbReference type="Pfam" id="PF02810">
    <property type="entry name" value="SEC-C"/>
    <property type="match status" value="1"/>
</dbReference>
<dbReference type="Pfam" id="PF07517">
    <property type="entry name" value="SecA_DEAD"/>
    <property type="match status" value="1"/>
</dbReference>
<dbReference type="Pfam" id="PF01043">
    <property type="entry name" value="SecA_PP_bind"/>
    <property type="match status" value="1"/>
</dbReference>
<dbReference type="Pfam" id="PF07516">
    <property type="entry name" value="SecA_SW"/>
    <property type="match status" value="1"/>
</dbReference>
<dbReference type="PRINTS" id="PR00906">
    <property type="entry name" value="SECA"/>
</dbReference>
<dbReference type="SMART" id="SM00957">
    <property type="entry name" value="SecA_DEAD"/>
    <property type="match status" value="1"/>
</dbReference>
<dbReference type="SMART" id="SM00958">
    <property type="entry name" value="SecA_PP_bind"/>
    <property type="match status" value="1"/>
</dbReference>
<dbReference type="SUPFAM" id="SSF81886">
    <property type="entry name" value="Helical scaffold and wing domains of SecA"/>
    <property type="match status" value="1"/>
</dbReference>
<dbReference type="SUPFAM" id="SSF52540">
    <property type="entry name" value="P-loop containing nucleoside triphosphate hydrolases"/>
    <property type="match status" value="2"/>
</dbReference>
<dbReference type="SUPFAM" id="SSF81767">
    <property type="entry name" value="Pre-protein crosslinking domain of SecA"/>
    <property type="match status" value="1"/>
</dbReference>
<dbReference type="PROSITE" id="PS01312">
    <property type="entry name" value="SECA"/>
    <property type="match status" value="1"/>
</dbReference>
<dbReference type="PROSITE" id="PS51196">
    <property type="entry name" value="SECA_MOTOR_DEAD"/>
    <property type="match status" value="1"/>
</dbReference>